<comment type="function">
    <text evidence="2">Involved in both the arginine and lysine biosynthetic pathways.</text>
</comment>
<comment type="catalytic activity">
    <reaction evidence="2">
        <text>N(2)-acetyl-L-ornithine + 2-oxoglutarate = N-acetyl-L-glutamate 5-semialdehyde + L-glutamate</text>
        <dbReference type="Rhea" id="RHEA:18049"/>
        <dbReference type="ChEBI" id="CHEBI:16810"/>
        <dbReference type="ChEBI" id="CHEBI:29123"/>
        <dbReference type="ChEBI" id="CHEBI:29985"/>
        <dbReference type="ChEBI" id="CHEBI:57805"/>
        <dbReference type="EC" id="2.6.1.11"/>
    </reaction>
</comment>
<comment type="catalytic activity">
    <reaction evidence="2">
        <text>N-succinyl-(2S,6S)-2,6-diaminopimelate + 2-oxoglutarate = (S)-2-succinylamino-6-oxoheptanedioate + L-glutamate</text>
        <dbReference type="Rhea" id="RHEA:11960"/>
        <dbReference type="ChEBI" id="CHEBI:15685"/>
        <dbReference type="ChEBI" id="CHEBI:16810"/>
        <dbReference type="ChEBI" id="CHEBI:29985"/>
        <dbReference type="ChEBI" id="CHEBI:58087"/>
        <dbReference type="EC" id="2.6.1.17"/>
    </reaction>
</comment>
<comment type="cofactor">
    <cofactor evidence="2">
        <name>pyridoxal 5'-phosphate</name>
        <dbReference type="ChEBI" id="CHEBI:597326"/>
    </cofactor>
    <text evidence="2">Binds 1 pyridoxal phosphate per subunit.</text>
</comment>
<comment type="pathway">
    <text evidence="2">Amino-acid biosynthesis; L-arginine biosynthesis; N(2)-acetyl-L-ornithine from L-glutamate: step 4/4.</text>
</comment>
<comment type="pathway">
    <text evidence="2">Amino-acid biosynthesis; L-lysine biosynthesis via DAP pathway; LL-2,6-diaminopimelate from (S)-tetrahydrodipicolinate (succinylase route): step 2/3.</text>
</comment>
<comment type="subunit">
    <text evidence="2">Homodimer.</text>
</comment>
<comment type="subcellular location">
    <subcellularLocation>
        <location evidence="2">Cytoplasm</location>
    </subcellularLocation>
</comment>
<comment type="miscellaneous">
    <text evidence="1">The reaction catalyzed by ACOAT is highly reversible. This enzyme may also transaminate ornithine (By similarity).</text>
</comment>
<comment type="similarity">
    <text evidence="2">Belongs to the class-III pyridoxal-phosphate-dependent aminotransferase family. ArgD subfamily.</text>
</comment>
<evidence type="ECO:0000250" key="1"/>
<evidence type="ECO:0000255" key="2">
    <source>
        <dbReference type="HAMAP-Rule" id="MF_01107"/>
    </source>
</evidence>
<feature type="initiator methionine" description="Removed" evidence="1">
    <location>
        <position position="1"/>
    </location>
</feature>
<feature type="chain" id="PRO_0000112744" description="Acetylornithine/succinyldiaminopimelate aminotransferase">
    <location>
        <begin position="2"/>
        <end position="406"/>
    </location>
</feature>
<feature type="binding site" evidence="2">
    <location>
        <begin position="108"/>
        <end position="109"/>
    </location>
    <ligand>
        <name>pyridoxal 5'-phosphate</name>
        <dbReference type="ChEBI" id="CHEBI:597326"/>
    </ligand>
</feature>
<feature type="binding site" evidence="2">
    <location>
        <position position="141"/>
    </location>
    <ligand>
        <name>pyridoxal 5'-phosphate</name>
        <dbReference type="ChEBI" id="CHEBI:597326"/>
    </ligand>
</feature>
<feature type="binding site" evidence="2">
    <location>
        <position position="144"/>
    </location>
    <ligand>
        <name>N(2)-acetyl-L-ornithine</name>
        <dbReference type="ChEBI" id="CHEBI:57805"/>
    </ligand>
</feature>
<feature type="binding site" evidence="2">
    <location>
        <begin position="226"/>
        <end position="229"/>
    </location>
    <ligand>
        <name>pyridoxal 5'-phosphate</name>
        <dbReference type="ChEBI" id="CHEBI:597326"/>
    </ligand>
</feature>
<feature type="binding site" evidence="2">
    <location>
        <position position="283"/>
    </location>
    <ligand>
        <name>N(2)-acetyl-L-ornithine</name>
        <dbReference type="ChEBI" id="CHEBI:57805"/>
    </ligand>
</feature>
<feature type="binding site" evidence="2">
    <location>
        <position position="284"/>
    </location>
    <ligand>
        <name>pyridoxal 5'-phosphate</name>
        <dbReference type="ChEBI" id="CHEBI:597326"/>
    </ligand>
</feature>
<feature type="modified residue" description="N6-(pyridoxal phosphate)lysine" evidence="2">
    <location>
        <position position="255"/>
    </location>
</feature>
<dbReference type="EC" id="2.6.1.11" evidence="2"/>
<dbReference type="EC" id="2.6.1.17" evidence="2"/>
<dbReference type="EMBL" id="AE014075">
    <property type="protein sequence ID" value="AAN82572.1"/>
    <property type="molecule type" value="Genomic_DNA"/>
</dbReference>
<dbReference type="RefSeq" id="WP_000963800.1">
    <property type="nucleotide sequence ID" value="NZ_CP051263.1"/>
</dbReference>
<dbReference type="SMR" id="P59317"/>
<dbReference type="STRING" id="199310.c4134"/>
<dbReference type="KEGG" id="ecc:c4134"/>
<dbReference type="eggNOG" id="COG4992">
    <property type="taxonomic scope" value="Bacteria"/>
</dbReference>
<dbReference type="HOGENOM" id="CLU_016922_10_1_6"/>
<dbReference type="BioCyc" id="ECOL199310:C4134-MONOMER"/>
<dbReference type="UniPathway" id="UPA00034">
    <property type="reaction ID" value="UER00020"/>
</dbReference>
<dbReference type="UniPathway" id="UPA00068">
    <property type="reaction ID" value="UER00109"/>
</dbReference>
<dbReference type="Proteomes" id="UP000001410">
    <property type="component" value="Chromosome"/>
</dbReference>
<dbReference type="GO" id="GO:0005737">
    <property type="term" value="C:cytoplasm"/>
    <property type="evidence" value="ECO:0007669"/>
    <property type="project" value="UniProtKB-SubCell"/>
</dbReference>
<dbReference type="GO" id="GO:0042802">
    <property type="term" value="F:identical protein binding"/>
    <property type="evidence" value="ECO:0007669"/>
    <property type="project" value="TreeGrafter"/>
</dbReference>
<dbReference type="GO" id="GO:0003992">
    <property type="term" value="F:N2-acetyl-L-ornithine:2-oxoglutarate 5-aminotransferase activity"/>
    <property type="evidence" value="ECO:0007669"/>
    <property type="project" value="UniProtKB-UniRule"/>
</dbReference>
<dbReference type="GO" id="GO:0030170">
    <property type="term" value="F:pyridoxal phosphate binding"/>
    <property type="evidence" value="ECO:0007669"/>
    <property type="project" value="InterPro"/>
</dbReference>
<dbReference type="GO" id="GO:0009016">
    <property type="term" value="F:succinyldiaminopimelate transaminase activity"/>
    <property type="evidence" value="ECO:0007669"/>
    <property type="project" value="UniProtKB-UniRule"/>
</dbReference>
<dbReference type="GO" id="GO:0006526">
    <property type="term" value="P:L-arginine biosynthetic process"/>
    <property type="evidence" value="ECO:0007669"/>
    <property type="project" value="UniProtKB-UniRule"/>
</dbReference>
<dbReference type="GO" id="GO:0009089">
    <property type="term" value="P:lysine biosynthetic process via diaminopimelate"/>
    <property type="evidence" value="ECO:0007669"/>
    <property type="project" value="UniProtKB-UniRule"/>
</dbReference>
<dbReference type="CDD" id="cd00610">
    <property type="entry name" value="OAT_like"/>
    <property type="match status" value="1"/>
</dbReference>
<dbReference type="FunFam" id="3.40.640.10:FF:000004">
    <property type="entry name" value="Acetylornithine aminotransferase"/>
    <property type="match status" value="1"/>
</dbReference>
<dbReference type="FunFam" id="3.90.1150.10:FF:000009">
    <property type="entry name" value="Succinylornithine transaminase"/>
    <property type="match status" value="1"/>
</dbReference>
<dbReference type="Gene3D" id="3.90.1150.10">
    <property type="entry name" value="Aspartate Aminotransferase, domain 1"/>
    <property type="match status" value="1"/>
</dbReference>
<dbReference type="Gene3D" id="3.40.640.10">
    <property type="entry name" value="Type I PLP-dependent aspartate aminotransferase-like (Major domain)"/>
    <property type="match status" value="1"/>
</dbReference>
<dbReference type="HAMAP" id="MF_01107">
    <property type="entry name" value="ArgD_aminotrans_3"/>
    <property type="match status" value="1"/>
</dbReference>
<dbReference type="InterPro" id="IPR017652">
    <property type="entry name" value="Ac/SucOrn_transaminase_bac"/>
</dbReference>
<dbReference type="InterPro" id="IPR004636">
    <property type="entry name" value="AcOrn/SuccOrn_fam"/>
</dbReference>
<dbReference type="InterPro" id="IPR005814">
    <property type="entry name" value="Aminotrans_3"/>
</dbReference>
<dbReference type="InterPro" id="IPR049704">
    <property type="entry name" value="Aminotrans_3_PPA_site"/>
</dbReference>
<dbReference type="InterPro" id="IPR050103">
    <property type="entry name" value="Class-III_PLP-dep_AT"/>
</dbReference>
<dbReference type="InterPro" id="IPR015424">
    <property type="entry name" value="PyrdxlP-dep_Trfase"/>
</dbReference>
<dbReference type="InterPro" id="IPR015421">
    <property type="entry name" value="PyrdxlP-dep_Trfase_major"/>
</dbReference>
<dbReference type="InterPro" id="IPR015422">
    <property type="entry name" value="PyrdxlP-dep_Trfase_small"/>
</dbReference>
<dbReference type="NCBIfam" id="TIGR03246">
    <property type="entry name" value="arg_catab_astC"/>
    <property type="match status" value="1"/>
</dbReference>
<dbReference type="NCBIfam" id="TIGR00707">
    <property type="entry name" value="argD"/>
    <property type="match status" value="1"/>
</dbReference>
<dbReference type="NCBIfam" id="NF002325">
    <property type="entry name" value="PRK01278.1"/>
    <property type="match status" value="1"/>
</dbReference>
<dbReference type="NCBIfam" id="NF003468">
    <property type="entry name" value="PRK05093.1"/>
    <property type="match status" value="1"/>
</dbReference>
<dbReference type="NCBIfam" id="NF009047">
    <property type="entry name" value="PRK12381.1"/>
    <property type="match status" value="1"/>
</dbReference>
<dbReference type="PANTHER" id="PTHR11986:SF122">
    <property type="entry name" value="ACETYLORNITHINE_SUCCINYLDIAMINOPIMELATE AMINOTRANSFERASE"/>
    <property type="match status" value="1"/>
</dbReference>
<dbReference type="PANTHER" id="PTHR11986">
    <property type="entry name" value="AMINOTRANSFERASE CLASS III"/>
    <property type="match status" value="1"/>
</dbReference>
<dbReference type="Pfam" id="PF00202">
    <property type="entry name" value="Aminotran_3"/>
    <property type="match status" value="1"/>
</dbReference>
<dbReference type="PIRSF" id="PIRSF000521">
    <property type="entry name" value="Transaminase_4ab_Lys_Orn"/>
    <property type="match status" value="1"/>
</dbReference>
<dbReference type="SUPFAM" id="SSF53383">
    <property type="entry name" value="PLP-dependent transferases"/>
    <property type="match status" value="1"/>
</dbReference>
<dbReference type="PROSITE" id="PS00600">
    <property type="entry name" value="AA_TRANSFER_CLASS_3"/>
    <property type="match status" value="1"/>
</dbReference>
<gene>
    <name evidence="2" type="primary">argD</name>
    <name evidence="2" type="synonym">dapC</name>
    <name type="ordered locus">c4134</name>
</gene>
<protein>
    <recommendedName>
        <fullName evidence="2">Acetylornithine/succinyldiaminopimelate aminotransferase</fullName>
        <shortName evidence="2">ACOAT</shortName>
        <shortName evidence="2">DapATase</shortName>
        <shortName evidence="2">Succinyldiaminopimelate transferase</shortName>
        <ecNumber evidence="2">2.6.1.11</ecNumber>
        <ecNumber evidence="2">2.6.1.17</ecNumber>
    </recommendedName>
</protein>
<sequence>MAIEQTAITRATFDEVILPIYAPAEFIPVKGQGSRIWDQQGKEYVDFAGGIAVTALGHCHPALVNALKTQGETLWHISNVFTNEPALRLGRKLIEATFAERVVFMNSGTEANETAFKLARHYACVRHSPFKTKIIAFHNAFHGRSLFTVSVGGQPKYSDGFGPKPADIIHVPFNDLHAVKAVMDDHTCAVVVEPIQGEGGVTAATPEFLQGLRELCDQHQALLVFDEVQCGMGRTGDLFAYMHYGVTPDILTSAKALGGGFPVSAMLTTAEIASAFHPGSHGSTYGGNPLACAVAGAAFDIINTPEVLEGIQAKRQHFVDHLQKIDQQYDVFSDIRGMGLLIGAELKPQYKGRARDFLYAGAEEGVMVLNAGPDVMRFAPSLVVEDADIDEGMHRFAHAVAKVVGA</sequence>
<proteinExistence type="inferred from homology"/>
<accession>P59317</accession>
<organism>
    <name type="scientific">Escherichia coli O6:H1 (strain CFT073 / ATCC 700928 / UPEC)</name>
    <dbReference type="NCBI Taxonomy" id="199310"/>
    <lineage>
        <taxon>Bacteria</taxon>
        <taxon>Pseudomonadati</taxon>
        <taxon>Pseudomonadota</taxon>
        <taxon>Gammaproteobacteria</taxon>
        <taxon>Enterobacterales</taxon>
        <taxon>Enterobacteriaceae</taxon>
        <taxon>Escherichia</taxon>
    </lineage>
</organism>
<name>ARGD_ECOL6</name>
<reference key="1">
    <citation type="journal article" date="2002" name="Proc. Natl. Acad. Sci. U.S.A.">
        <title>Extensive mosaic structure revealed by the complete genome sequence of uropathogenic Escherichia coli.</title>
        <authorList>
            <person name="Welch R.A."/>
            <person name="Burland V."/>
            <person name="Plunkett G. III"/>
            <person name="Redford P."/>
            <person name="Roesch P."/>
            <person name="Rasko D."/>
            <person name="Buckles E.L."/>
            <person name="Liou S.-R."/>
            <person name="Boutin A."/>
            <person name="Hackett J."/>
            <person name="Stroud D."/>
            <person name="Mayhew G.F."/>
            <person name="Rose D.J."/>
            <person name="Zhou S."/>
            <person name="Schwartz D.C."/>
            <person name="Perna N.T."/>
            <person name="Mobley H.L.T."/>
            <person name="Donnenberg M.S."/>
            <person name="Blattner F.R."/>
        </authorList>
    </citation>
    <scope>NUCLEOTIDE SEQUENCE [LARGE SCALE GENOMIC DNA]</scope>
    <source>
        <strain>CFT073 / ATCC 700928 / UPEC</strain>
    </source>
</reference>
<keyword id="KW-0028">Amino-acid biosynthesis</keyword>
<keyword id="KW-0032">Aminotransferase</keyword>
<keyword id="KW-0055">Arginine biosynthesis</keyword>
<keyword id="KW-0963">Cytoplasm</keyword>
<keyword id="KW-0457">Lysine biosynthesis</keyword>
<keyword id="KW-0663">Pyridoxal phosphate</keyword>
<keyword id="KW-1185">Reference proteome</keyword>
<keyword id="KW-0808">Transferase</keyword>